<protein>
    <recommendedName>
        <fullName evidence="1">Large ribosomal subunit protein uL29</fullName>
    </recommendedName>
    <alternativeName>
        <fullName evidence="2">50S ribosomal protein L29</fullName>
    </alternativeName>
</protein>
<name>RL29_COREF</name>
<keyword id="KW-1185">Reference proteome</keyword>
<keyword id="KW-0687">Ribonucleoprotein</keyword>
<keyword id="KW-0689">Ribosomal protein</keyword>
<sequence length="76" mass="8778">MAIGTPAHEFRELNEEELVNRLNEAKEELFNLRFQLATGQLTNNRRLRTVKRDIARIYTVIRERELGLSVVPGAEA</sequence>
<feature type="chain" id="PRO_0000130380" description="Large ribosomal subunit protein uL29">
    <location>
        <begin position="1"/>
        <end position="76"/>
    </location>
</feature>
<evidence type="ECO:0000255" key="1">
    <source>
        <dbReference type="HAMAP-Rule" id="MF_00374"/>
    </source>
</evidence>
<evidence type="ECO:0000305" key="2"/>
<comment type="similarity">
    <text evidence="1">Belongs to the universal ribosomal protein uL29 family.</text>
</comment>
<accession>Q8FS74</accession>
<dbReference type="EMBL" id="BA000035">
    <property type="protein sequence ID" value="BAC17340.1"/>
    <property type="molecule type" value="Genomic_DNA"/>
</dbReference>
<dbReference type="RefSeq" id="WP_006769797.1">
    <property type="nucleotide sequence ID" value="NZ_GG700687.1"/>
</dbReference>
<dbReference type="SMR" id="Q8FS74"/>
<dbReference type="STRING" id="196164.gene:10740932"/>
<dbReference type="KEGG" id="cef:CE0530"/>
<dbReference type="eggNOG" id="COG0255">
    <property type="taxonomic scope" value="Bacteria"/>
</dbReference>
<dbReference type="HOGENOM" id="CLU_158491_3_3_11"/>
<dbReference type="OrthoDB" id="9815192at2"/>
<dbReference type="Proteomes" id="UP000001409">
    <property type="component" value="Chromosome"/>
</dbReference>
<dbReference type="GO" id="GO:0022625">
    <property type="term" value="C:cytosolic large ribosomal subunit"/>
    <property type="evidence" value="ECO:0007669"/>
    <property type="project" value="TreeGrafter"/>
</dbReference>
<dbReference type="GO" id="GO:0003735">
    <property type="term" value="F:structural constituent of ribosome"/>
    <property type="evidence" value="ECO:0007669"/>
    <property type="project" value="InterPro"/>
</dbReference>
<dbReference type="GO" id="GO:0006412">
    <property type="term" value="P:translation"/>
    <property type="evidence" value="ECO:0007669"/>
    <property type="project" value="UniProtKB-UniRule"/>
</dbReference>
<dbReference type="CDD" id="cd00427">
    <property type="entry name" value="Ribosomal_L29_HIP"/>
    <property type="match status" value="1"/>
</dbReference>
<dbReference type="FunFam" id="1.10.287.310:FF:000001">
    <property type="entry name" value="50S ribosomal protein L29"/>
    <property type="match status" value="1"/>
</dbReference>
<dbReference type="Gene3D" id="1.10.287.310">
    <property type="match status" value="1"/>
</dbReference>
<dbReference type="HAMAP" id="MF_00374">
    <property type="entry name" value="Ribosomal_uL29"/>
    <property type="match status" value="1"/>
</dbReference>
<dbReference type="InterPro" id="IPR050063">
    <property type="entry name" value="Ribosomal_protein_uL29"/>
</dbReference>
<dbReference type="InterPro" id="IPR001854">
    <property type="entry name" value="Ribosomal_uL29"/>
</dbReference>
<dbReference type="InterPro" id="IPR018254">
    <property type="entry name" value="Ribosomal_uL29_CS"/>
</dbReference>
<dbReference type="InterPro" id="IPR036049">
    <property type="entry name" value="Ribosomal_uL29_sf"/>
</dbReference>
<dbReference type="NCBIfam" id="TIGR00012">
    <property type="entry name" value="L29"/>
    <property type="match status" value="1"/>
</dbReference>
<dbReference type="PANTHER" id="PTHR10916">
    <property type="entry name" value="60S RIBOSOMAL PROTEIN L35/50S RIBOSOMAL PROTEIN L29"/>
    <property type="match status" value="1"/>
</dbReference>
<dbReference type="PANTHER" id="PTHR10916:SF0">
    <property type="entry name" value="LARGE RIBOSOMAL SUBUNIT PROTEIN UL29C"/>
    <property type="match status" value="1"/>
</dbReference>
<dbReference type="Pfam" id="PF00831">
    <property type="entry name" value="Ribosomal_L29"/>
    <property type="match status" value="1"/>
</dbReference>
<dbReference type="SUPFAM" id="SSF46561">
    <property type="entry name" value="Ribosomal protein L29 (L29p)"/>
    <property type="match status" value="1"/>
</dbReference>
<dbReference type="PROSITE" id="PS00579">
    <property type="entry name" value="RIBOSOMAL_L29"/>
    <property type="match status" value="1"/>
</dbReference>
<proteinExistence type="inferred from homology"/>
<organism>
    <name type="scientific">Corynebacterium efficiens (strain DSM 44549 / YS-314 / AJ 12310 / JCM 11189 / NBRC 100395)</name>
    <dbReference type="NCBI Taxonomy" id="196164"/>
    <lineage>
        <taxon>Bacteria</taxon>
        <taxon>Bacillati</taxon>
        <taxon>Actinomycetota</taxon>
        <taxon>Actinomycetes</taxon>
        <taxon>Mycobacteriales</taxon>
        <taxon>Corynebacteriaceae</taxon>
        <taxon>Corynebacterium</taxon>
    </lineage>
</organism>
<gene>
    <name evidence="1" type="primary">rpmC</name>
    <name type="ordered locus">CE0530</name>
</gene>
<reference key="1">
    <citation type="journal article" date="2003" name="Genome Res.">
        <title>Comparative complete genome sequence analysis of the amino acid replacements responsible for the thermostability of Corynebacterium efficiens.</title>
        <authorList>
            <person name="Nishio Y."/>
            <person name="Nakamura Y."/>
            <person name="Kawarabayasi Y."/>
            <person name="Usuda Y."/>
            <person name="Kimura E."/>
            <person name="Sugimoto S."/>
            <person name="Matsui K."/>
            <person name="Yamagishi A."/>
            <person name="Kikuchi H."/>
            <person name="Ikeo K."/>
            <person name="Gojobori T."/>
        </authorList>
    </citation>
    <scope>NUCLEOTIDE SEQUENCE [LARGE SCALE GENOMIC DNA]</scope>
    <source>
        <strain>DSM 44549 / YS-314 / AJ 12310 / JCM 11189 / NBRC 100395</strain>
    </source>
</reference>